<name>RL7_CYTH3</name>
<dbReference type="EMBL" id="CP000383">
    <property type="protein sequence ID" value="ABG60410.1"/>
    <property type="molecule type" value="Genomic_DNA"/>
</dbReference>
<dbReference type="RefSeq" id="WP_011586519.1">
    <property type="nucleotide sequence ID" value="NC_008255.1"/>
</dbReference>
<dbReference type="SMR" id="Q11QA4"/>
<dbReference type="STRING" id="269798.CHU_3170"/>
<dbReference type="KEGG" id="chu:CHU_3170"/>
<dbReference type="eggNOG" id="COG0222">
    <property type="taxonomic scope" value="Bacteria"/>
</dbReference>
<dbReference type="HOGENOM" id="CLU_086499_3_1_10"/>
<dbReference type="OrthoDB" id="9811748at2"/>
<dbReference type="Proteomes" id="UP000001822">
    <property type="component" value="Chromosome"/>
</dbReference>
<dbReference type="GO" id="GO:0022625">
    <property type="term" value="C:cytosolic large ribosomal subunit"/>
    <property type="evidence" value="ECO:0007669"/>
    <property type="project" value="TreeGrafter"/>
</dbReference>
<dbReference type="GO" id="GO:0003729">
    <property type="term" value="F:mRNA binding"/>
    <property type="evidence" value="ECO:0007669"/>
    <property type="project" value="TreeGrafter"/>
</dbReference>
<dbReference type="GO" id="GO:0003735">
    <property type="term" value="F:structural constituent of ribosome"/>
    <property type="evidence" value="ECO:0007669"/>
    <property type="project" value="InterPro"/>
</dbReference>
<dbReference type="GO" id="GO:0006412">
    <property type="term" value="P:translation"/>
    <property type="evidence" value="ECO:0007669"/>
    <property type="project" value="UniProtKB-UniRule"/>
</dbReference>
<dbReference type="CDD" id="cd00387">
    <property type="entry name" value="Ribosomal_L7_L12"/>
    <property type="match status" value="1"/>
</dbReference>
<dbReference type="FunFam" id="3.30.1390.10:FF:000001">
    <property type="entry name" value="50S ribosomal protein L7/L12"/>
    <property type="match status" value="1"/>
</dbReference>
<dbReference type="Gene3D" id="3.30.1390.10">
    <property type="match status" value="1"/>
</dbReference>
<dbReference type="Gene3D" id="1.20.5.710">
    <property type="entry name" value="Single helix bin"/>
    <property type="match status" value="1"/>
</dbReference>
<dbReference type="HAMAP" id="MF_00368">
    <property type="entry name" value="Ribosomal_bL12"/>
    <property type="match status" value="1"/>
</dbReference>
<dbReference type="InterPro" id="IPR000206">
    <property type="entry name" value="Ribosomal_bL12"/>
</dbReference>
<dbReference type="InterPro" id="IPR013823">
    <property type="entry name" value="Ribosomal_bL12_C"/>
</dbReference>
<dbReference type="InterPro" id="IPR014719">
    <property type="entry name" value="Ribosomal_bL12_C/ClpS-like"/>
</dbReference>
<dbReference type="InterPro" id="IPR008932">
    <property type="entry name" value="Ribosomal_bL12_oligo"/>
</dbReference>
<dbReference type="InterPro" id="IPR036235">
    <property type="entry name" value="Ribosomal_bL12_oligo_N_sf"/>
</dbReference>
<dbReference type="NCBIfam" id="TIGR00855">
    <property type="entry name" value="L12"/>
    <property type="match status" value="1"/>
</dbReference>
<dbReference type="PANTHER" id="PTHR45987">
    <property type="entry name" value="39S RIBOSOMAL PROTEIN L12"/>
    <property type="match status" value="1"/>
</dbReference>
<dbReference type="PANTHER" id="PTHR45987:SF4">
    <property type="entry name" value="LARGE RIBOSOMAL SUBUNIT PROTEIN BL12M"/>
    <property type="match status" value="1"/>
</dbReference>
<dbReference type="Pfam" id="PF00542">
    <property type="entry name" value="Ribosomal_L12"/>
    <property type="match status" value="1"/>
</dbReference>
<dbReference type="Pfam" id="PF16320">
    <property type="entry name" value="Ribosomal_L12_N"/>
    <property type="match status" value="1"/>
</dbReference>
<dbReference type="SUPFAM" id="SSF54736">
    <property type="entry name" value="ClpS-like"/>
    <property type="match status" value="1"/>
</dbReference>
<dbReference type="SUPFAM" id="SSF48300">
    <property type="entry name" value="Ribosomal protein L7/12, oligomerisation (N-terminal) domain"/>
    <property type="match status" value="1"/>
</dbReference>
<keyword id="KW-1185">Reference proteome</keyword>
<keyword id="KW-0687">Ribonucleoprotein</keyword>
<keyword id="KW-0689">Ribosomal protein</keyword>
<protein>
    <recommendedName>
        <fullName evidence="1">Large ribosomal subunit protein bL12</fullName>
    </recommendedName>
    <alternativeName>
        <fullName evidence="2">50S ribosomal protein L7/L12</fullName>
    </alternativeName>
</protein>
<gene>
    <name evidence="1" type="primary">rplL</name>
    <name type="ordered locus">CHU_3170</name>
</gene>
<organism>
    <name type="scientific">Cytophaga hutchinsonii (strain ATCC 33406 / DSM 1761 / CIP 103989 / NBRC 15051 / NCIMB 9469 / D465)</name>
    <dbReference type="NCBI Taxonomy" id="269798"/>
    <lineage>
        <taxon>Bacteria</taxon>
        <taxon>Pseudomonadati</taxon>
        <taxon>Bacteroidota</taxon>
        <taxon>Cytophagia</taxon>
        <taxon>Cytophagales</taxon>
        <taxon>Cytophagaceae</taxon>
        <taxon>Cytophaga</taxon>
    </lineage>
</organism>
<sequence length="123" mass="12660">MADLKAFAEQLVNLTVKEVNELASILKDEYGIEPAAAAVVVSGGGDAAAAVEEKTAFDVILKSAGASKLAVVKLVKDLTGLGLKEAKDLVDGAPKPVKEGASKDEAEAIKKQLEEAGAEVEIK</sequence>
<reference key="1">
    <citation type="journal article" date="2007" name="Appl. Environ. Microbiol.">
        <title>Genome sequence of the cellulolytic gliding bacterium Cytophaga hutchinsonii.</title>
        <authorList>
            <person name="Xie G."/>
            <person name="Bruce D.C."/>
            <person name="Challacombe J.F."/>
            <person name="Chertkov O."/>
            <person name="Detter J.C."/>
            <person name="Gilna P."/>
            <person name="Han C.S."/>
            <person name="Lucas S."/>
            <person name="Misra M."/>
            <person name="Myers G.L."/>
            <person name="Richardson P."/>
            <person name="Tapia R."/>
            <person name="Thayer N."/>
            <person name="Thompson L.S."/>
            <person name="Brettin T.S."/>
            <person name="Henrissat B."/>
            <person name="Wilson D.B."/>
            <person name="McBride M.J."/>
        </authorList>
    </citation>
    <scope>NUCLEOTIDE SEQUENCE [LARGE SCALE GENOMIC DNA]</scope>
    <source>
        <strain>ATCC 33406 / DSM 1761 / JCM 20678 / CIP 103989 / IAM 12607 / NBRC 15051 / NCIMB 9469 / D465</strain>
    </source>
</reference>
<accession>Q11QA4</accession>
<evidence type="ECO:0000255" key="1">
    <source>
        <dbReference type="HAMAP-Rule" id="MF_00368"/>
    </source>
</evidence>
<evidence type="ECO:0000305" key="2"/>
<proteinExistence type="inferred from homology"/>
<feature type="chain" id="PRO_1000006996" description="Large ribosomal subunit protein bL12">
    <location>
        <begin position="1"/>
        <end position="123"/>
    </location>
</feature>
<comment type="function">
    <text evidence="1">Forms part of the ribosomal stalk which helps the ribosome interact with GTP-bound translation factors. Is thus essential for accurate translation.</text>
</comment>
<comment type="subunit">
    <text evidence="1">Homodimer. Part of the ribosomal stalk of the 50S ribosomal subunit. Forms a multimeric L10(L12)X complex, where L10 forms an elongated spine to which 2 to 4 L12 dimers bind in a sequential fashion. Binds GTP-bound translation factors.</text>
</comment>
<comment type="similarity">
    <text evidence="1">Belongs to the bacterial ribosomal protein bL12 family.</text>
</comment>